<sequence length="46" mass="5346">MALSSTMWCTFLSMMLTALLSCHQQVILMRHILLKLFHNSLHKAML</sequence>
<keyword id="KW-1185">Reference proteome</keyword>
<organismHost>
    <name type="scientific">Acidianus sp. F28</name>
    <dbReference type="NCBI Taxonomy" id="315458"/>
</organismHost>
<accession>Q573E4</accession>
<organism>
    <name type="scientific">Acidianus filamentous virus 2 (isolate Italy/Pozzuoli)</name>
    <name type="common">AFV-2</name>
    <dbReference type="NCBI Taxonomy" id="654910"/>
    <lineage>
        <taxon>Viruses</taxon>
        <taxon>Adnaviria</taxon>
        <taxon>Zilligvirae</taxon>
        <taxon>Taleaviricota</taxon>
        <taxon>Tokiviricetes</taxon>
        <taxon>Ligamenvirales</taxon>
        <taxon>Lipothrixviridae</taxon>
        <taxon>Deltalipothrixvirus</taxon>
        <taxon>Acidianus filamentous virus 2</taxon>
    </lineage>
</organism>
<proteinExistence type="predicted"/>
<feature type="chain" id="PRO_0000384484" description="Uncharacterized protein ORF46">
    <location>
        <begin position="1"/>
        <end position="46"/>
    </location>
</feature>
<dbReference type="EMBL" id="AJ854042">
    <property type="protein sequence ID" value="CAH69412.1"/>
    <property type="molecule type" value="Genomic_DNA"/>
</dbReference>
<dbReference type="RefSeq" id="YP_001496950.1">
    <property type="nucleotide sequence ID" value="NC_009884.1"/>
</dbReference>
<dbReference type="SMR" id="Q573E4"/>
<dbReference type="KEGG" id="vg:5656098"/>
<dbReference type="Proteomes" id="UP000006364">
    <property type="component" value="Genome"/>
</dbReference>
<gene>
    <name type="ORF">ORF46</name>
</gene>
<name>Y046_AFV2P</name>
<protein>
    <recommendedName>
        <fullName>Uncharacterized protein ORF46</fullName>
    </recommendedName>
</protein>
<reference key="1">
    <citation type="journal article" date="2005" name="J. Bacteriol.">
        <title>Structure and genome organization of AFV2, a novel archaeal lipothrixvirus with unusual terminal and core structures.</title>
        <authorList>
            <person name="Haring M."/>
            <person name="Vestergaard G."/>
            <person name="Brugger K."/>
            <person name="Rachel R."/>
            <person name="Garrett R.A."/>
            <person name="Prangishvili D."/>
        </authorList>
    </citation>
    <scope>NUCLEOTIDE SEQUENCE [GENOMIC DNA]</scope>
</reference>